<protein>
    <recommendedName>
        <fullName evidence="1">Type III pantothenate kinase</fullName>
        <ecNumber evidence="1">2.7.1.33</ecNumber>
    </recommendedName>
    <alternativeName>
        <fullName evidence="1">PanK-III</fullName>
    </alternativeName>
    <alternativeName>
        <fullName evidence="1">Pantothenic acid kinase</fullName>
    </alternativeName>
</protein>
<keyword id="KW-0067">ATP-binding</keyword>
<keyword id="KW-0173">Coenzyme A biosynthesis</keyword>
<keyword id="KW-0963">Cytoplasm</keyword>
<keyword id="KW-0418">Kinase</keyword>
<keyword id="KW-0479">Metal-binding</keyword>
<keyword id="KW-0547">Nucleotide-binding</keyword>
<keyword id="KW-0630">Potassium</keyword>
<keyword id="KW-0808">Transferase</keyword>
<sequence length="260" mass="27879">MLLAIDSGNTNIVFAVYDGDTLRGEWRASTDSERTADELGVWLTQLLTIEGLNRLDISAAIIASVVPAMVFGLKTLCRRYFKCEPLVVGDEGVDLGLSILLDRPEEVGADRLVNAVAAHKYYKGPLIVIDFGTATTFDVVDADGNYCGGAISPGINLSLEALHMAAAKLPRVAIGRPRQVIGRATVPAMQSGIFWGYVGLIEGLVKRIKEEFGSDMLVLATGGLAPLFAEATKVINALDADLTLRGLLEIHRRNSTPVRG</sequence>
<name>COAX_PARM1</name>
<comment type="function">
    <text evidence="1">Catalyzes the phosphorylation of pantothenate (Pan), the first step in CoA biosynthesis.</text>
</comment>
<comment type="catalytic activity">
    <reaction evidence="1">
        <text>(R)-pantothenate + ATP = (R)-4'-phosphopantothenate + ADP + H(+)</text>
        <dbReference type="Rhea" id="RHEA:16373"/>
        <dbReference type="ChEBI" id="CHEBI:10986"/>
        <dbReference type="ChEBI" id="CHEBI:15378"/>
        <dbReference type="ChEBI" id="CHEBI:29032"/>
        <dbReference type="ChEBI" id="CHEBI:30616"/>
        <dbReference type="ChEBI" id="CHEBI:456216"/>
        <dbReference type="EC" id="2.7.1.33"/>
    </reaction>
</comment>
<comment type="cofactor">
    <cofactor evidence="1">
        <name>NH4(+)</name>
        <dbReference type="ChEBI" id="CHEBI:28938"/>
    </cofactor>
    <cofactor evidence="1">
        <name>K(+)</name>
        <dbReference type="ChEBI" id="CHEBI:29103"/>
    </cofactor>
    <text evidence="1">A monovalent cation. Ammonium or potassium.</text>
</comment>
<comment type="pathway">
    <text evidence="1">Cofactor biosynthesis; coenzyme A biosynthesis; CoA from (R)-pantothenate: step 1/5.</text>
</comment>
<comment type="subunit">
    <text evidence="1">Homodimer.</text>
</comment>
<comment type="subcellular location">
    <subcellularLocation>
        <location evidence="1">Cytoplasm</location>
    </subcellularLocation>
</comment>
<comment type="similarity">
    <text evidence="1">Belongs to the type III pantothenate kinase family.</text>
</comment>
<feature type="chain" id="PRO_0000267559" description="Type III pantothenate kinase">
    <location>
        <begin position="1"/>
        <end position="260"/>
    </location>
</feature>
<feature type="active site" description="Proton acceptor" evidence="1">
    <location>
        <position position="110"/>
    </location>
</feature>
<feature type="binding site" evidence="1">
    <location>
        <begin position="6"/>
        <end position="13"/>
    </location>
    <ligand>
        <name>ATP</name>
        <dbReference type="ChEBI" id="CHEBI:30616"/>
    </ligand>
</feature>
<feature type="binding site" evidence="1">
    <location>
        <begin position="108"/>
        <end position="111"/>
    </location>
    <ligand>
        <name>substrate</name>
    </ligand>
</feature>
<feature type="binding site" evidence="1">
    <location>
        <position position="130"/>
    </location>
    <ligand>
        <name>K(+)</name>
        <dbReference type="ChEBI" id="CHEBI:29103"/>
    </ligand>
</feature>
<feature type="binding site" evidence="1">
    <location>
        <position position="133"/>
    </location>
    <ligand>
        <name>ATP</name>
        <dbReference type="ChEBI" id="CHEBI:30616"/>
    </ligand>
</feature>
<feature type="binding site" evidence="1">
    <location>
        <position position="185"/>
    </location>
    <ligand>
        <name>substrate</name>
    </ligand>
</feature>
<gene>
    <name evidence="1" type="primary">coaX</name>
    <name type="ordered locus">amb2772</name>
</gene>
<reference key="1">
    <citation type="journal article" date="2005" name="DNA Res.">
        <title>Complete genome sequence of the facultative anaerobic magnetotactic bacterium Magnetospirillum sp. strain AMB-1.</title>
        <authorList>
            <person name="Matsunaga T."/>
            <person name="Okamura Y."/>
            <person name="Fukuda Y."/>
            <person name="Wahyudi A.T."/>
            <person name="Murase Y."/>
            <person name="Takeyama H."/>
        </authorList>
    </citation>
    <scope>NUCLEOTIDE SEQUENCE [LARGE SCALE GENOMIC DNA]</scope>
    <source>
        <strain>ATCC 700264 / AMB-1</strain>
    </source>
</reference>
<accession>Q2W3J9</accession>
<evidence type="ECO:0000255" key="1">
    <source>
        <dbReference type="HAMAP-Rule" id="MF_01274"/>
    </source>
</evidence>
<dbReference type="EC" id="2.7.1.33" evidence="1"/>
<dbReference type="EMBL" id="AP007255">
    <property type="protein sequence ID" value="BAE51576.1"/>
    <property type="molecule type" value="Genomic_DNA"/>
</dbReference>
<dbReference type="RefSeq" id="WP_011385151.1">
    <property type="nucleotide sequence ID" value="NC_007626.1"/>
</dbReference>
<dbReference type="SMR" id="Q2W3J9"/>
<dbReference type="STRING" id="342108.amb2772"/>
<dbReference type="KEGG" id="mag:amb2772"/>
<dbReference type="HOGENOM" id="CLU_066627_1_0_5"/>
<dbReference type="OrthoDB" id="9804707at2"/>
<dbReference type="UniPathway" id="UPA00241">
    <property type="reaction ID" value="UER00352"/>
</dbReference>
<dbReference type="Proteomes" id="UP000007058">
    <property type="component" value="Chromosome"/>
</dbReference>
<dbReference type="GO" id="GO:0005737">
    <property type="term" value="C:cytoplasm"/>
    <property type="evidence" value="ECO:0007669"/>
    <property type="project" value="UniProtKB-SubCell"/>
</dbReference>
<dbReference type="GO" id="GO:0005524">
    <property type="term" value="F:ATP binding"/>
    <property type="evidence" value="ECO:0007669"/>
    <property type="project" value="UniProtKB-UniRule"/>
</dbReference>
<dbReference type="GO" id="GO:0046872">
    <property type="term" value="F:metal ion binding"/>
    <property type="evidence" value="ECO:0007669"/>
    <property type="project" value="UniProtKB-KW"/>
</dbReference>
<dbReference type="GO" id="GO:0004594">
    <property type="term" value="F:pantothenate kinase activity"/>
    <property type="evidence" value="ECO:0007669"/>
    <property type="project" value="UniProtKB-UniRule"/>
</dbReference>
<dbReference type="GO" id="GO:0015937">
    <property type="term" value="P:coenzyme A biosynthetic process"/>
    <property type="evidence" value="ECO:0007669"/>
    <property type="project" value="UniProtKB-UniRule"/>
</dbReference>
<dbReference type="CDD" id="cd24015">
    <property type="entry name" value="ASKHA_NBD_PanK-III"/>
    <property type="match status" value="1"/>
</dbReference>
<dbReference type="Gene3D" id="3.30.420.40">
    <property type="match status" value="2"/>
</dbReference>
<dbReference type="HAMAP" id="MF_01274">
    <property type="entry name" value="Pantothen_kinase_3"/>
    <property type="match status" value="1"/>
</dbReference>
<dbReference type="InterPro" id="IPR043129">
    <property type="entry name" value="ATPase_NBD"/>
</dbReference>
<dbReference type="InterPro" id="IPR004619">
    <property type="entry name" value="Type_III_PanK"/>
</dbReference>
<dbReference type="NCBIfam" id="TIGR00671">
    <property type="entry name" value="baf"/>
    <property type="match status" value="1"/>
</dbReference>
<dbReference type="NCBIfam" id="NF009844">
    <property type="entry name" value="PRK13318.1-2"/>
    <property type="match status" value="1"/>
</dbReference>
<dbReference type="NCBIfam" id="NF009848">
    <property type="entry name" value="PRK13318.1-6"/>
    <property type="match status" value="1"/>
</dbReference>
<dbReference type="NCBIfam" id="NF009855">
    <property type="entry name" value="PRK13321.1"/>
    <property type="match status" value="1"/>
</dbReference>
<dbReference type="PANTHER" id="PTHR34265">
    <property type="entry name" value="TYPE III PANTOTHENATE KINASE"/>
    <property type="match status" value="1"/>
</dbReference>
<dbReference type="PANTHER" id="PTHR34265:SF1">
    <property type="entry name" value="TYPE III PANTOTHENATE KINASE"/>
    <property type="match status" value="1"/>
</dbReference>
<dbReference type="Pfam" id="PF03309">
    <property type="entry name" value="Pan_kinase"/>
    <property type="match status" value="1"/>
</dbReference>
<dbReference type="SUPFAM" id="SSF53067">
    <property type="entry name" value="Actin-like ATPase domain"/>
    <property type="match status" value="2"/>
</dbReference>
<organism>
    <name type="scientific">Paramagnetospirillum magneticum (strain ATCC 700264 / AMB-1)</name>
    <name type="common">Magnetospirillum magneticum</name>
    <dbReference type="NCBI Taxonomy" id="342108"/>
    <lineage>
        <taxon>Bacteria</taxon>
        <taxon>Pseudomonadati</taxon>
        <taxon>Pseudomonadota</taxon>
        <taxon>Alphaproteobacteria</taxon>
        <taxon>Rhodospirillales</taxon>
        <taxon>Magnetospirillaceae</taxon>
        <taxon>Paramagnetospirillum</taxon>
    </lineage>
</organism>
<proteinExistence type="inferred from homology"/>